<sequence>MPQLLQNINGIIEAFRRYARTEGNCTALTRGELKRLLEQEFADVIVKPHDPATVDEVLRLLDEDHTGTVEFKEFLVLVFKVAQACFKTLSESAEGACGSQESGSLHSGASQELGEGQRSGTEVGRAGKGQHYEGSSHRQSQQGSRGQNRPGVQTQGQATGSAWVSSYDRQAESQSQERISPQIQLSGQTEQTQKAGEGKRNQTTEMRPERQPQTREQDRAHQTGETVTGSGTQTQAGATQTVEQDSSHQTGRTSKQTQEATNDQNRGTETHGQGRSQTSQAVTGGHAQIQAGTHTQTPTQTVEQDSSHQTGSTSTQTQESTNGQNRGTEIHGQGRSQTSQAVTGGHTQIQAGSHTETVEQDRSQTVSHGGAREQGQTQTQPGSGQRWMQVSNPEAGETVPGGQAQTGASTESGRQEWSSTHPRRCVTEGQGDRQPTVVGEEWVDDHSRETVILRLDQGNLHTSVSSAQGQDAAQSEEKRGITARELYSYLRSTKP</sequence>
<comment type="function">
    <text evidence="11">Promotes cell proliferation, G1/S cell cycle progression and induces expression of the cell cycle regulator CCND1 (PubMed:30009832). Regulates proliferation induced by pro-inflammatory cytokine response via activation of NFKB1 and PI3K/AKT signaling pathways (PubMed:30009832).</text>
</comment>
<comment type="subunit">
    <text evidence="6">Homodimer.</text>
</comment>
<comment type="interaction">
    <interactant intactId="EBI-3197866">
        <id>Q9UBG3</id>
    </interactant>
    <interactant intactId="EBI-2798728">
        <id>P61968</id>
        <label>LMO4</label>
    </interactant>
    <organismsDiffer>false</organismsDiffer>
    <experiments>3</experiments>
</comment>
<comment type="subcellular location">
    <subcellularLocation>
        <location evidence="5 8">Cytoplasm</location>
    </subcellularLocation>
    <text>Does not colocalize with TGM1.</text>
</comment>
<comment type="tissue specificity">
    <text evidence="3 4 5 6 7 8 9 11">Expressed in the basal skin layer (at protein level) (PubMed:30009832). Squamous epithelia cell-specific. Expressed in the esophagus (periphery of the cells of the granular and the upper spinous layers), foreskin (granular and lower cornified cells), scalp skin (granular layer), inner root sheath of the hair follicle and in primary keratinocytes (at protein level). Expressed in the squamous epithelium of the cervix, esophagus, foreskin and larynx. Expressed in the fetal bladder and scalp skin. Expressed at very low levels in the lung, kidney, uterus, skeletal muscle, heart and fetal brain. Undetectable or barely detectable in esophageal and oral squamous cell carcinoma compared with the matched adjacent normal esophageal mucosa. Undetectable or barely detectable in larynx and esophagus from patients with pH-documented laryngopharyngeal reflux (LPR).</text>
</comment>
<comment type="induction">
    <text evidence="4 6 8 11">Up-regulated after heat shock, ponasterone A and deoxycholic acid (PubMed:15896671, PubMed:16640557). Induced in response to pro-inflammatory cytokines (PubMed:30009832).</text>
</comment>
<comment type="domain">
    <text>The EF-hand is necessary for the colony survival activity to protect cells from death induced by exposure to DCA.</text>
</comment>
<comment type="disease" evidence="10">
    <disease id="DI-01537">
        <name>Esophageal cancer</name>
        <acronym>ESCR</acronym>
        <description>A malignancy of the esophagus. The most common types are esophageal squamous cell carcinoma and adenocarcinoma. Cancer of the esophagus remains a devastating disease because it is usually not detected until it has progressed to an advanced incurable stage.</description>
        <dbReference type="MIM" id="133239"/>
    </disease>
    <text>Disease susceptibility is associated with variants affecting the gene represented in this entry.</text>
</comment>
<comment type="disease">
    <text evidence="11">CRNN expression is increased in psoriasis patients suggesting a potential role in disease pathogenesis.</text>
</comment>
<comment type="similarity">
    <text evidence="13">Belongs to the S100-fused protein family.</text>
</comment>
<name>CRNN_HUMAN</name>
<reference key="1">
    <citation type="journal article" date="2000" name="Genomics">
        <title>Novel human esophagus-specific gene c1orf10: cDNA cloning, gene structure, and frequent loss of expression in esophageal cancer.</title>
        <authorList>
            <person name="Xu Z."/>
            <person name="Wang M.-R."/>
            <person name="Xu X."/>
            <person name="Cai Y."/>
            <person name="Han Y.-L."/>
            <person name="Wu K.-M."/>
            <person name="Wang J."/>
            <person name="Chen B.-S."/>
            <person name="Wang X.-Q."/>
            <person name="Wu M."/>
        </authorList>
    </citation>
    <scope>NUCLEOTIDE SEQUENCE [GENOMIC DNA / MRNA]</scope>
    <scope>TISSUE SPECIFICITY</scope>
    <source>
        <tissue>Fetal esophagus</tissue>
    </source>
</reference>
<reference key="2">
    <citation type="journal article" date="2004" name="Nat. Genet.">
        <title>Complete sequencing and characterization of 21,243 full-length human cDNAs.</title>
        <authorList>
            <person name="Ota T."/>
            <person name="Suzuki Y."/>
            <person name="Nishikawa T."/>
            <person name="Otsuki T."/>
            <person name="Sugiyama T."/>
            <person name="Irie R."/>
            <person name="Wakamatsu A."/>
            <person name="Hayashi K."/>
            <person name="Sato H."/>
            <person name="Nagai K."/>
            <person name="Kimura K."/>
            <person name="Makita H."/>
            <person name="Sekine M."/>
            <person name="Obayashi M."/>
            <person name="Nishi T."/>
            <person name="Shibahara T."/>
            <person name="Tanaka T."/>
            <person name="Ishii S."/>
            <person name="Yamamoto J."/>
            <person name="Saito K."/>
            <person name="Kawai Y."/>
            <person name="Isono Y."/>
            <person name="Nakamura Y."/>
            <person name="Nagahari K."/>
            <person name="Murakami K."/>
            <person name="Yasuda T."/>
            <person name="Iwayanagi T."/>
            <person name="Wagatsuma M."/>
            <person name="Shiratori A."/>
            <person name="Sudo H."/>
            <person name="Hosoiri T."/>
            <person name="Kaku Y."/>
            <person name="Kodaira H."/>
            <person name="Kondo H."/>
            <person name="Sugawara M."/>
            <person name="Takahashi M."/>
            <person name="Kanda K."/>
            <person name="Yokoi T."/>
            <person name="Furuya T."/>
            <person name="Kikkawa E."/>
            <person name="Omura Y."/>
            <person name="Abe K."/>
            <person name="Kamihara K."/>
            <person name="Katsuta N."/>
            <person name="Sato K."/>
            <person name="Tanikawa M."/>
            <person name="Yamazaki M."/>
            <person name="Ninomiya K."/>
            <person name="Ishibashi T."/>
            <person name="Yamashita H."/>
            <person name="Murakawa K."/>
            <person name="Fujimori K."/>
            <person name="Tanai H."/>
            <person name="Kimata M."/>
            <person name="Watanabe M."/>
            <person name="Hiraoka S."/>
            <person name="Chiba Y."/>
            <person name="Ishida S."/>
            <person name="Ono Y."/>
            <person name="Takiguchi S."/>
            <person name="Watanabe S."/>
            <person name="Yosida M."/>
            <person name="Hotuta T."/>
            <person name="Kusano J."/>
            <person name="Kanehori K."/>
            <person name="Takahashi-Fujii A."/>
            <person name="Hara H."/>
            <person name="Tanase T.-O."/>
            <person name="Nomura Y."/>
            <person name="Togiya S."/>
            <person name="Komai F."/>
            <person name="Hara R."/>
            <person name="Takeuchi K."/>
            <person name="Arita M."/>
            <person name="Imose N."/>
            <person name="Musashino K."/>
            <person name="Yuuki H."/>
            <person name="Oshima A."/>
            <person name="Sasaki N."/>
            <person name="Aotsuka S."/>
            <person name="Yoshikawa Y."/>
            <person name="Matsunawa H."/>
            <person name="Ichihara T."/>
            <person name="Shiohata N."/>
            <person name="Sano S."/>
            <person name="Moriya S."/>
            <person name="Momiyama H."/>
            <person name="Satoh N."/>
            <person name="Takami S."/>
            <person name="Terashima Y."/>
            <person name="Suzuki O."/>
            <person name="Nakagawa S."/>
            <person name="Senoh A."/>
            <person name="Mizoguchi H."/>
            <person name="Goto Y."/>
            <person name="Shimizu F."/>
            <person name="Wakebe H."/>
            <person name="Hishigaki H."/>
            <person name="Watanabe T."/>
            <person name="Sugiyama A."/>
            <person name="Takemoto M."/>
            <person name="Kawakami B."/>
            <person name="Yamazaki M."/>
            <person name="Watanabe K."/>
            <person name="Kumagai A."/>
            <person name="Itakura S."/>
            <person name="Fukuzumi Y."/>
            <person name="Fujimori Y."/>
            <person name="Komiyama M."/>
            <person name="Tashiro H."/>
            <person name="Tanigami A."/>
            <person name="Fujiwara T."/>
            <person name="Ono T."/>
            <person name="Yamada K."/>
            <person name="Fujii Y."/>
            <person name="Ozaki K."/>
            <person name="Hirao M."/>
            <person name="Ohmori Y."/>
            <person name="Kawabata A."/>
            <person name="Hikiji T."/>
            <person name="Kobatake N."/>
            <person name="Inagaki H."/>
            <person name="Ikema Y."/>
            <person name="Okamoto S."/>
            <person name="Okitani R."/>
            <person name="Kawakami T."/>
            <person name="Noguchi S."/>
            <person name="Itoh T."/>
            <person name="Shigeta K."/>
            <person name="Senba T."/>
            <person name="Matsumura K."/>
            <person name="Nakajima Y."/>
            <person name="Mizuno T."/>
            <person name="Morinaga M."/>
            <person name="Sasaki M."/>
            <person name="Togashi T."/>
            <person name="Oyama M."/>
            <person name="Hata H."/>
            <person name="Watanabe M."/>
            <person name="Komatsu T."/>
            <person name="Mizushima-Sugano J."/>
            <person name="Satoh T."/>
            <person name="Shirai Y."/>
            <person name="Takahashi Y."/>
            <person name="Nakagawa K."/>
            <person name="Okumura K."/>
            <person name="Nagase T."/>
            <person name="Nomura N."/>
            <person name="Kikuchi H."/>
            <person name="Masuho Y."/>
            <person name="Yamashita R."/>
            <person name="Nakai K."/>
            <person name="Yada T."/>
            <person name="Nakamura Y."/>
            <person name="Ohara O."/>
            <person name="Isogai T."/>
            <person name="Sugano S."/>
        </authorList>
    </citation>
    <scope>NUCLEOTIDE SEQUENCE [LARGE SCALE MRNA]</scope>
    <source>
        <tissue>Esophagus</tissue>
    </source>
</reference>
<reference key="3">
    <citation type="journal article" date="2006" name="Nature">
        <title>The DNA sequence and biological annotation of human chromosome 1.</title>
        <authorList>
            <person name="Gregory S.G."/>
            <person name="Barlow K.F."/>
            <person name="McLay K.E."/>
            <person name="Kaul R."/>
            <person name="Swarbreck D."/>
            <person name="Dunham A."/>
            <person name="Scott C.E."/>
            <person name="Howe K.L."/>
            <person name="Woodfine K."/>
            <person name="Spencer C.C.A."/>
            <person name="Jones M.C."/>
            <person name="Gillson C."/>
            <person name="Searle S."/>
            <person name="Zhou Y."/>
            <person name="Kokocinski F."/>
            <person name="McDonald L."/>
            <person name="Evans R."/>
            <person name="Phillips K."/>
            <person name="Atkinson A."/>
            <person name="Cooper R."/>
            <person name="Jones C."/>
            <person name="Hall R.E."/>
            <person name="Andrews T.D."/>
            <person name="Lloyd C."/>
            <person name="Ainscough R."/>
            <person name="Almeida J.P."/>
            <person name="Ambrose K.D."/>
            <person name="Anderson F."/>
            <person name="Andrew R.W."/>
            <person name="Ashwell R.I.S."/>
            <person name="Aubin K."/>
            <person name="Babbage A.K."/>
            <person name="Bagguley C.L."/>
            <person name="Bailey J."/>
            <person name="Beasley H."/>
            <person name="Bethel G."/>
            <person name="Bird C.P."/>
            <person name="Bray-Allen S."/>
            <person name="Brown J.Y."/>
            <person name="Brown A.J."/>
            <person name="Buckley D."/>
            <person name="Burton J."/>
            <person name="Bye J."/>
            <person name="Carder C."/>
            <person name="Chapman J.C."/>
            <person name="Clark S.Y."/>
            <person name="Clarke G."/>
            <person name="Clee C."/>
            <person name="Cobley V."/>
            <person name="Collier R.E."/>
            <person name="Corby N."/>
            <person name="Coville G.J."/>
            <person name="Davies J."/>
            <person name="Deadman R."/>
            <person name="Dunn M."/>
            <person name="Earthrowl M."/>
            <person name="Ellington A.G."/>
            <person name="Errington H."/>
            <person name="Frankish A."/>
            <person name="Frankland J."/>
            <person name="French L."/>
            <person name="Garner P."/>
            <person name="Garnett J."/>
            <person name="Gay L."/>
            <person name="Ghori M.R.J."/>
            <person name="Gibson R."/>
            <person name="Gilby L.M."/>
            <person name="Gillett W."/>
            <person name="Glithero R.J."/>
            <person name="Grafham D.V."/>
            <person name="Griffiths C."/>
            <person name="Griffiths-Jones S."/>
            <person name="Grocock R."/>
            <person name="Hammond S."/>
            <person name="Harrison E.S.I."/>
            <person name="Hart E."/>
            <person name="Haugen E."/>
            <person name="Heath P.D."/>
            <person name="Holmes S."/>
            <person name="Holt K."/>
            <person name="Howden P.J."/>
            <person name="Hunt A.R."/>
            <person name="Hunt S.E."/>
            <person name="Hunter G."/>
            <person name="Isherwood J."/>
            <person name="James R."/>
            <person name="Johnson C."/>
            <person name="Johnson D."/>
            <person name="Joy A."/>
            <person name="Kay M."/>
            <person name="Kershaw J.K."/>
            <person name="Kibukawa M."/>
            <person name="Kimberley A.M."/>
            <person name="King A."/>
            <person name="Knights A.J."/>
            <person name="Lad H."/>
            <person name="Laird G."/>
            <person name="Lawlor S."/>
            <person name="Leongamornlert D.A."/>
            <person name="Lloyd D.M."/>
            <person name="Loveland J."/>
            <person name="Lovell J."/>
            <person name="Lush M.J."/>
            <person name="Lyne R."/>
            <person name="Martin S."/>
            <person name="Mashreghi-Mohammadi M."/>
            <person name="Matthews L."/>
            <person name="Matthews N.S.W."/>
            <person name="McLaren S."/>
            <person name="Milne S."/>
            <person name="Mistry S."/>
            <person name="Moore M.J.F."/>
            <person name="Nickerson T."/>
            <person name="O'Dell C.N."/>
            <person name="Oliver K."/>
            <person name="Palmeiri A."/>
            <person name="Palmer S.A."/>
            <person name="Parker A."/>
            <person name="Patel D."/>
            <person name="Pearce A.V."/>
            <person name="Peck A.I."/>
            <person name="Pelan S."/>
            <person name="Phelps K."/>
            <person name="Phillimore B.J."/>
            <person name="Plumb R."/>
            <person name="Rajan J."/>
            <person name="Raymond C."/>
            <person name="Rouse G."/>
            <person name="Saenphimmachak C."/>
            <person name="Sehra H.K."/>
            <person name="Sheridan E."/>
            <person name="Shownkeen R."/>
            <person name="Sims S."/>
            <person name="Skuce C.D."/>
            <person name="Smith M."/>
            <person name="Steward C."/>
            <person name="Subramanian S."/>
            <person name="Sycamore N."/>
            <person name="Tracey A."/>
            <person name="Tromans A."/>
            <person name="Van Helmond Z."/>
            <person name="Wall M."/>
            <person name="Wallis J.M."/>
            <person name="White S."/>
            <person name="Whitehead S.L."/>
            <person name="Wilkinson J.E."/>
            <person name="Willey D.L."/>
            <person name="Williams H."/>
            <person name="Wilming L."/>
            <person name="Wray P.W."/>
            <person name="Wu Z."/>
            <person name="Coulson A."/>
            <person name="Vaudin M."/>
            <person name="Sulston J.E."/>
            <person name="Durbin R.M."/>
            <person name="Hubbard T."/>
            <person name="Wooster R."/>
            <person name="Dunham I."/>
            <person name="Carter N.P."/>
            <person name="McVean G."/>
            <person name="Ross M.T."/>
            <person name="Harrow J."/>
            <person name="Olson M.V."/>
            <person name="Beck S."/>
            <person name="Rogers J."/>
            <person name="Bentley D.R."/>
        </authorList>
    </citation>
    <scope>NUCLEOTIDE SEQUENCE [LARGE SCALE GENOMIC DNA]</scope>
</reference>
<reference key="4">
    <citation type="submission" date="2005-09" db="EMBL/GenBank/DDBJ databases">
        <authorList>
            <person name="Mural R.J."/>
            <person name="Istrail S."/>
            <person name="Sutton G.G."/>
            <person name="Florea L."/>
            <person name="Halpern A.L."/>
            <person name="Mobarry C.M."/>
            <person name="Lippert R."/>
            <person name="Walenz B."/>
            <person name="Shatkay H."/>
            <person name="Dew I."/>
            <person name="Miller J.R."/>
            <person name="Flanigan M.J."/>
            <person name="Edwards N.J."/>
            <person name="Bolanos R."/>
            <person name="Fasulo D."/>
            <person name="Halldorsson B.V."/>
            <person name="Hannenhalli S."/>
            <person name="Turner R."/>
            <person name="Yooseph S."/>
            <person name="Lu F."/>
            <person name="Nusskern D.R."/>
            <person name="Shue B.C."/>
            <person name="Zheng X.H."/>
            <person name="Zhong F."/>
            <person name="Delcher A.L."/>
            <person name="Huson D.H."/>
            <person name="Kravitz S.A."/>
            <person name="Mouchard L."/>
            <person name="Reinert K."/>
            <person name="Remington K.A."/>
            <person name="Clark A.G."/>
            <person name="Waterman M.S."/>
            <person name="Eichler E.E."/>
            <person name="Adams M.D."/>
            <person name="Hunkapiller M.W."/>
            <person name="Myers E.W."/>
            <person name="Venter J.C."/>
        </authorList>
    </citation>
    <scope>NUCLEOTIDE SEQUENCE [LARGE SCALE GENOMIC DNA]</scope>
</reference>
<reference key="5">
    <citation type="journal article" date="2004" name="Genome Res.">
        <title>The status, quality, and expansion of the NIH full-length cDNA project: the Mammalian Gene Collection (MGC).</title>
        <authorList>
            <consortium name="The MGC Project Team"/>
        </authorList>
    </citation>
    <scope>NUCLEOTIDE SEQUENCE [LARGE SCALE MRNA]</scope>
    <source>
        <tissue>Skeletal muscle</tissue>
    </source>
</reference>
<reference key="6">
    <citation type="journal article" date="2001" name="Eur. J. Biochem.">
        <title>The human oesophageal squamous epithelium exhibits a novel type of heat shock protein response.</title>
        <authorList>
            <person name="Yagui-Beltran A."/>
            <person name="Craig A.L."/>
            <person name="Lawrie L."/>
            <person name="Thompson D."/>
            <person name="Pospisilova S."/>
            <person name="Johnston D."/>
            <person name="Kernohan N."/>
            <person name="Hopwood D."/>
            <person name="Dillon J.F."/>
            <person name="Hupp T.R."/>
        </authorList>
    </citation>
    <scope>INDUCTION</scope>
    <scope>TISSUE SPECIFICITY</scope>
    <scope>IDENTIFICATION BY MASS SPECTROMETRY</scope>
</reference>
<reference key="7">
    <citation type="journal article" date="2005" name="Int. J. Biochem. Cell Biol.">
        <title>Chromosome 1 open reading frame 10 (C1orf10) gene is frequently down-regulated and inhibits cell proliferation in oral squamous cell carcinoma.</title>
        <authorList>
            <person name="Imai F.L."/>
            <person name="Uzawa K."/>
            <person name="Nimura Y."/>
            <person name="Moriya T."/>
            <person name="Imai M.A."/>
            <person name="Shiiba M."/>
            <person name="Bukawa H."/>
            <person name="Yokoe H."/>
            <person name="Tanzawa H."/>
        </authorList>
    </citation>
    <scope>SUBUNIT</scope>
    <scope>INDUCTION</scope>
    <scope>TISSUE SPECIFICITY</scope>
</reference>
<reference key="8">
    <citation type="journal article" date="2005" name="J. Invest. Dermatol.">
        <title>Cornulin, a new member of the 'fused gene' family, is expressed during epidermal differentiation.</title>
        <authorList>
            <person name="Contzler R."/>
            <person name="Favre B."/>
            <person name="Huber M."/>
            <person name="Hohl D."/>
        </authorList>
    </citation>
    <scope>SUBCELLULAR LOCATION</scope>
    <scope>TISSUE SPECIFICITY</scope>
</reference>
<reference key="9">
    <citation type="journal article" date="2006" name="Ann. Otol. Rhinol. Laryngol.">
        <title>Effect of pepsin on laryngeal stress protein (Sep70, Sep53, and Hsp70) response: role in laryngopharyngeal reflux disease.</title>
        <authorList>
            <person name="Johnston N."/>
            <person name="Dettmar P.W."/>
            <person name="Lively M.O."/>
            <person name="Postma G.N."/>
            <person name="Belafsky P.C."/>
            <person name="Birchall M."/>
            <person name="Koufman J.A."/>
        </authorList>
    </citation>
    <scope>TISSUE SPECIFICITY</scope>
</reference>
<reference key="10">
    <citation type="journal article" date="2006" name="FEBS J.">
        <title>The calcium-binding domain of the stress protein SEP53 is required for survival in response to deoxycholic acid-mediated injury.</title>
        <authorList>
            <person name="Darragh J."/>
            <person name="Hunter M."/>
            <person name="Pohler E."/>
            <person name="Nelson L."/>
            <person name="Dillon J.F."/>
            <person name="Nenutil R."/>
            <person name="Vojtesek B."/>
            <person name="Ross P.E."/>
            <person name="Kernohan N."/>
            <person name="Hupp T.R."/>
        </authorList>
    </citation>
    <scope>INDUCTION</scope>
    <scope>SUBCELLULAR LOCATION</scope>
    <scope>TISSUE SPECIFICITY</scope>
</reference>
<reference key="11">
    <citation type="journal article" date="2007" name="Clin. Cancer Res.">
        <title>Decreased expression of gene cluster at chromosome 1q21 defines molecular subgroups of chemoradiotherapy response in esophageal cancers.</title>
        <authorList>
            <person name="Luthra M.G."/>
            <person name="Ajani J.A."/>
            <person name="Izzo J."/>
            <person name="Ensor J."/>
            <person name="Wu T.T."/>
            <person name="Rashid A."/>
            <person name="Zhang L."/>
            <person name="Phan A."/>
            <person name="Fukami N."/>
            <person name="Luthra R."/>
        </authorList>
    </citation>
    <scope>TISSUE SPECIFICITY</scope>
</reference>
<reference key="12">
    <citation type="journal article" date="2019" name="J. Invest. Dermatol.">
        <title>Cornulin Is Induced in Psoriasis Lesions and Promotes Keratinocyte Proliferation via Phosphoinositide 3-Kinase/Akt Pathways.</title>
        <authorList>
            <person name="Li C."/>
            <person name="Xiao L."/>
            <person name="Jia J."/>
            <person name="Li F."/>
            <person name="Wang X."/>
            <person name="Duan Q."/>
            <person name="Jing H."/>
            <person name="Yang P."/>
            <person name="Chen C."/>
            <person name="Wang Q."/>
            <person name="Liu J."/>
            <person name="Shao Y."/>
            <person name="Wang N."/>
            <person name="Zheng Y."/>
        </authorList>
    </citation>
    <scope>FUNCTION</scope>
    <scope>TISSUE SPECIFICITY</scope>
    <scope>INDUCTION</scope>
    <scope>POSSIBLE INVOLVEMENT IN PSORIASIS</scope>
</reference>
<reference key="13">
    <citation type="journal article" date="2009" name="Cancer Sci.">
        <title>Genetic variants of C1orf10 and risk of esophageal squamous cell carcinoma in a Chinese population.</title>
        <authorList>
            <person name="Zhang W."/>
            <person name="Chen X."/>
            <person name="Luo A."/>
            <person name="Lin D."/>
            <person name="Tan W."/>
            <person name="Liu Z."/>
        </authorList>
    </citation>
    <scope>INVOLVEMENT IN ESCR</scope>
    <scope>VARIANT ESCR SER-480</scope>
</reference>
<proteinExistence type="evidence at protein level"/>
<accession>Q9UBG3</accession>
<accession>B2RE60</accession>
<accession>Q8N613</accession>
<feature type="chain" id="PRO_0000305586" description="Cornulin">
    <location>
        <begin position="1"/>
        <end position="495"/>
    </location>
</feature>
<feature type="domain" description="EF-hand" evidence="1">
    <location>
        <begin position="49"/>
        <end position="84"/>
    </location>
</feature>
<feature type="region of interest" description="Disordered" evidence="2">
    <location>
        <begin position="96"/>
        <end position="439"/>
    </location>
</feature>
<feature type="region of interest" description="Disordered" evidence="2">
    <location>
        <begin position="460"/>
        <end position="481"/>
    </location>
</feature>
<feature type="compositionally biased region" description="Polar residues" evidence="2">
    <location>
        <begin position="99"/>
        <end position="110"/>
    </location>
</feature>
<feature type="compositionally biased region" description="Low complexity" evidence="2">
    <location>
        <begin position="137"/>
        <end position="151"/>
    </location>
</feature>
<feature type="compositionally biased region" description="Polar residues" evidence="2">
    <location>
        <begin position="152"/>
        <end position="194"/>
    </location>
</feature>
<feature type="compositionally biased region" description="Basic and acidic residues" evidence="2">
    <location>
        <begin position="196"/>
        <end position="222"/>
    </location>
</feature>
<feature type="compositionally biased region" description="Low complexity" evidence="2">
    <location>
        <begin position="226"/>
        <end position="242"/>
    </location>
</feature>
<feature type="compositionally biased region" description="Polar residues" evidence="2">
    <location>
        <begin position="243"/>
        <end position="282"/>
    </location>
</feature>
<feature type="compositionally biased region" description="Polar residues" evidence="2">
    <location>
        <begin position="290"/>
        <end position="303"/>
    </location>
</feature>
<feature type="compositionally biased region" description="Low complexity" evidence="2">
    <location>
        <begin position="307"/>
        <end position="324"/>
    </location>
</feature>
<feature type="compositionally biased region" description="Polar residues" evidence="2">
    <location>
        <begin position="334"/>
        <end position="355"/>
    </location>
</feature>
<feature type="compositionally biased region" description="Low complexity" evidence="2">
    <location>
        <begin position="374"/>
        <end position="385"/>
    </location>
</feature>
<feature type="compositionally biased region" description="Polar residues" evidence="2">
    <location>
        <begin position="403"/>
        <end position="420"/>
    </location>
</feature>
<feature type="compositionally biased region" description="Polar residues" evidence="2">
    <location>
        <begin position="460"/>
        <end position="473"/>
    </location>
</feature>
<feature type="binding site" evidence="1">
    <location>
        <position position="62"/>
    </location>
    <ligand>
        <name>Ca(2+)</name>
        <dbReference type="ChEBI" id="CHEBI:29108"/>
    </ligand>
</feature>
<feature type="binding site" evidence="1">
    <location>
        <position position="64"/>
    </location>
    <ligand>
        <name>Ca(2+)</name>
        <dbReference type="ChEBI" id="CHEBI:29108"/>
    </ligand>
</feature>
<feature type="binding site" evidence="1">
    <location>
        <position position="66"/>
    </location>
    <ligand>
        <name>Ca(2+)</name>
        <dbReference type="ChEBI" id="CHEBI:29108"/>
    </ligand>
</feature>
<feature type="binding site" evidence="1">
    <location>
        <position position="68"/>
    </location>
    <ligand>
        <name>Ca(2+)</name>
        <dbReference type="ChEBI" id="CHEBI:29108"/>
    </ligand>
</feature>
<feature type="binding site" evidence="1">
    <location>
        <position position="73"/>
    </location>
    <ligand>
        <name>Ca(2+)</name>
        <dbReference type="ChEBI" id="CHEBI:29108"/>
    </ligand>
</feature>
<feature type="sequence variant" id="VAR_048469" description="In dbSNP:rs35639220.">
    <original>A</original>
    <variation>V</variation>
    <location>
        <position position="27"/>
    </location>
</feature>
<feature type="sequence variant" id="VAR_048470" description="In dbSNP:rs6695830.">
    <original>Q</original>
    <variation>H</variation>
    <location>
        <position position="374"/>
    </location>
</feature>
<feature type="sequence variant" id="VAR_048471" description="In ESCR; dbSNP:rs3829868." evidence="10">
    <original>G</original>
    <variation>S</variation>
    <location>
        <position position="480"/>
    </location>
</feature>
<gene>
    <name type="primary">CRNN</name>
    <name evidence="12" type="synonym">C1orf10</name>
    <name type="synonym">DRC1</name>
    <name type="synonym">PDRC1</name>
    <name evidence="12" type="synonym">SEP53</name>
</gene>
<keyword id="KW-0106">Calcium</keyword>
<keyword id="KW-0963">Cytoplasm</keyword>
<keyword id="KW-0225">Disease variant</keyword>
<keyword id="KW-0479">Metal-binding</keyword>
<keyword id="KW-1267">Proteomics identification</keyword>
<keyword id="KW-1185">Reference proteome</keyword>
<protein>
    <recommendedName>
        <fullName>Cornulin</fullName>
    </recommendedName>
    <alternativeName>
        <fullName>53 kDa putative calcium-binding protein</fullName>
    </alternativeName>
    <alternativeName>
        <fullName>53 kDa squamous epithelial-induced stress protein</fullName>
    </alternativeName>
    <alternativeName>
        <fullName>58 kDa heat shock protein</fullName>
    </alternativeName>
    <alternativeName>
        <fullName>Squamous epithelial heat shock protein 53</fullName>
    </alternativeName>
    <alternativeName>
        <fullName>Tumor-related protein</fullName>
    </alternativeName>
</protein>
<dbReference type="EMBL" id="AF077831">
    <property type="protein sequence ID" value="AAD55747.1"/>
    <property type="molecule type" value="mRNA"/>
</dbReference>
<dbReference type="EMBL" id="AF185276">
    <property type="protein sequence ID" value="AAF00514.1"/>
    <property type="molecule type" value="Genomic_DNA"/>
</dbReference>
<dbReference type="EMBL" id="AK316568">
    <property type="protein sequence ID" value="BAG38157.1"/>
    <property type="molecule type" value="mRNA"/>
</dbReference>
<dbReference type="EMBL" id="AL135842">
    <property type="status" value="NOT_ANNOTATED_CDS"/>
    <property type="molecule type" value="Genomic_DNA"/>
</dbReference>
<dbReference type="EMBL" id="CH471121">
    <property type="protein sequence ID" value="EAW53381.1"/>
    <property type="molecule type" value="Genomic_DNA"/>
</dbReference>
<dbReference type="EMBL" id="BC030807">
    <property type="protein sequence ID" value="AAH30807.1"/>
    <property type="molecule type" value="mRNA"/>
</dbReference>
<dbReference type="CCDS" id="CCDS1010.1"/>
<dbReference type="RefSeq" id="NP_057274.1">
    <property type="nucleotide sequence ID" value="NM_016190.3"/>
</dbReference>
<dbReference type="SMR" id="Q9UBG3"/>
<dbReference type="BioGRID" id="119069">
    <property type="interactions" value="104"/>
</dbReference>
<dbReference type="FunCoup" id="Q9UBG3">
    <property type="interactions" value="285"/>
</dbReference>
<dbReference type="IntAct" id="Q9UBG3">
    <property type="interactions" value="58"/>
</dbReference>
<dbReference type="MINT" id="Q9UBG3"/>
<dbReference type="STRING" id="9606.ENSP00000271835"/>
<dbReference type="iPTMnet" id="Q9UBG3"/>
<dbReference type="PhosphoSitePlus" id="Q9UBG3"/>
<dbReference type="BioMuta" id="CRNN"/>
<dbReference type="DMDM" id="74761891"/>
<dbReference type="jPOST" id="Q9UBG3"/>
<dbReference type="MassIVE" id="Q9UBG3"/>
<dbReference type="PaxDb" id="9606-ENSP00000271835"/>
<dbReference type="PeptideAtlas" id="Q9UBG3"/>
<dbReference type="PRIDE" id="Q9UBG3"/>
<dbReference type="ProteomicsDB" id="83965"/>
<dbReference type="Pumba" id="Q9UBG3"/>
<dbReference type="Antibodypedia" id="20343">
    <property type="antibodies" value="140 antibodies from 26 providers"/>
</dbReference>
<dbReference type="DNASU" id="49860"/>
<dbReference type="Ensembl" id="ENST00000271835.3">
    <property type="protein sequence ID" value="ENSP00000271835.3"/>
    <property type="gene ID" value="ENSG00000143536.7"/>
</dbReference>
<dbReference type="GeneID" id="49860"/>
<dbReference type="KEGG" id="hsa:49860"/>
<dbReference type="MANE-Select" id="ENST00000271835.3">
    <property type="protein sequence ID" value="ENSP00000271835.3"/>
    <property type="RefSeq nucleotide sequence ID" value="NM_016190.3"/>
    <property type="RefSeq protein sequence ID" value="NP_057274.1"/>
</dbReference>
<dbReference type="UCSC" id="uc001ezx.3">
    <property type="organism name" value="human"/>
</dbReference>
<dbReference type="AGR" id="HGNC:1230"/>
<dbReference type="CTD" id="49860"/>
<dbReference type="DisGeNET" id="49860"/>
<dbReference type="GeneCards" id="CRNN"/>
<dbReference type="HGNC" id="HGNC:1230">
    <property type="gene designation" value="CRNN"/>
</dbReference>
<dbReference type="HPA" id="ENSG00000143536">
    <property type="expression patterns" value="Tissue enhanced (esophagus, vagina)"/>
</dbReference>
<dbReference type="MalaCards" id="CRNN"/>
<dbReference type="MIM" id="133239">
    <property type="type" value="phenotype"/>
</dbReference>
<dbReference type="MIM" id="611312">
    <property type="type" value="gene"/>
</dbReference>
<dbReference type="neXtProt" id="NX_Q9UBG3"/>
<dbReference type="OpenTargets" id="ENSG00000143536"/>
<dbReference type="PharmGKB" id="PA25601"/>
<dbReference type="VEuPathDB" id="HostDB:ENSG00000143536"/>
<dbReference type="eggNOG" id="ENOG502SATM">
    <property type="taxonomic scope" value="Eukaryota"/>
</dbReference>
<dbReference type="GeneTree" id="ENSGT00940000162465"/>
<dbReference type="HOGENOM" id="CLU_043278_0_0_1"/>
<dbReference type="InParanoid" id="Q9UBG3"/>
<dbReference type="OMA" id="EWVDDHS"/>
<dbReference type="OrthoDB" id="9451669at2759"/>
<dbReference type="PAN-GO" id="Q9UBG3">
    <property type="GO annotations" value="6 GO annotations based on evolutionary models"/>
</dbReference>
<dbReference type="PhylomeDB" id="Q9UBG3"/>
<dbReference type="TreeFam" id="TF338665"/>
<dbReference type="PathwayCommons" id="Q9UBG3"/>
<dbReference type="SignaLink" id="Q9UBG3"/>
<dbReference type="BioGRID-ORCS" id="49860">
    <property type="hits" value="7 hits in 1136 CRISPR screens"/>
</dbReference>
<dbReference type="GenomeRNAi" id="49860"/>
<dbReference type="Pharos" id="Q9UBG3">
    <property type="development level" value="Tbio"/>
</dbReference>
<dbReference type="PRO" id="PR:Q9UBG3"/>
<dbReference type="Proteomes" id="UP000005640">
    <property type="component" value="Chromosome 1"/>
</dbReference>
<dbReference type="RNAct" id="Q9UBG3">
    <property type="molecule type" value="protein"/>
</dbReference>
<dbReference type="Bgee" id="ENSG00000143536">
    <property type="expression patterns" value="Expressed in lower esophagus mucosa and 91 other cell types or tissues"/>
</dbReference>
<dbReference type="GO" id="GO:0005737">
    <property type="term" value="C:cytoplasm"/>
    <property type="evidence" value="ECO:0000314"/>
    <property type="project" value="UniProtKB"/>
</dbReference>
<dbReference type="GO" id="GO:0070062">
    <property type="term" value="C:extracellular exosome"/>
    <property type="evidence" value="ECO:0007005"/>
    <property type="project" value="UniProtKB"/>
</dbReference>
<dbReference type="GO" id="GO:0016020">
    <property type="term" value="C:membrane"/>
    <property type="evidence" value="ECO:0000314"/>
    <property type="project" value="UniProtKB"/>
</dbReference>
<dbReference type="GO" id="GO:0005509">
    <property type="term" value="F:calcium ion binding"/>
    <property type="evidence" value="ECO:0000318"/>
    <property type="project" value="GO_Central"/>
</dbReference>
<dbReference type="GO" id="GO:0048306">
    <property type="term" value="F:calcium-dependent protein binding"/>
    <property type="evidence" value="ECO:0000318"/>
    <property type="project" value="GO_Central"/>
</dbReference>
<dbReference type="GO" id="GO:0046914">
    <property type="term" value="F:transition metal ion binding"/>
    <property type="evidence" value="ECO:0007669"/>
    <property type="project" value="InterPro"/>
</dbReference>
<dbReference type="GO" id="GO:0098609">
    <property type="term" value="P:cell-cell adhesion"/>
    <property type="evidence" value="ECO:0000314"/>
    <property type="project" value="UniProtKB"/>
</dbReference>
<dbReference type="GO" id="GO:0071345">
    <property type="term" value="P:cellular response to cytokine stimulus"/>
    <property type="evidence" value="ECO:0000314"/>
    <property type="project" value="UniProtKB"/>
</dbReference>
<dbReference type="GO" id="GO:1902808">
    <property type="term" value="P:positive regulation of cell cycle G1/S phase transition"/>
    <property type="evidence" value="ECO:0000315"/>
    <property type="project" value="UniProtKB"/>
</dbReference>
<dbReference type="GO" id="GO:0010838">
    <property type="term" value="P:positive regulation of keratinocyte proliferation"/>
    <property type="evidence" value="ECO:0000315"/>
    <property type="project" value="UniProtKB"/>
</dbReference>
<dbReference type="GO" id="GO:0051092">
    <property type="term" value="P:positive regulation of NF-kappaB transcription factor activity"/>
    <property type="evidence" value="ECO:0000315"/>
    <property type="project" value="UniProtKB"/>
</dbReference>
<dbReference type="GO" id="GO:0010468">
    <property type="term" value="P:regulation of gene expression"/>
    <property type="evidence" value="ECO:0000315"/>
    <property type="project" value="UniProtKB"/>
</dbReference>
<dbReference type="GO" id="GO:0051896">
    <property type="term" value="P:regulation of phosphatidylinositol 3-kinase/protein kinase B signal transduction"/>
    <property type="evidence" value="ECO:0000315"/>
    <property type="project" value="UniProtKB"/>
</dbReference>
<dbReference type="GO" id="GO:0009408">
    <property type="term" value="P:response to heat"/>
    <property type="evidence" value="ECO:0000314"/>
    <property type="project" value="UniProtKB"/>
</dbReference>
<dbReference type="CDD" id="cd00213">
    <property type="entry name" value="S-100"/>
    <property type="match status" value="1"/>
</dbReference>
<dbReference type="FunFam" id="1.10.238.10:FF:000303">
    <property type="entry name" value="Cornulin"/>
    <property type="match status" value="1"/>
</dbReference>
<dbReference type="Gene3D" id="1.10.238.10">
    <property type="entry name" value="EF-hand"/>
    <property type="match status" value="1"/>
</dbReference>
<dbReference type="InterPro" id="IPR011992">
    <property type="entry name" value="EF-hand-dom_pair"/>
</dbReference>
<dbReference type="InterPro" id="IPR018247">
    <property type="entry name" value="EF_Hand_1_Ca_BS"/>
</dbReference>
<dbReference type="InterPro" id="IPR002048">
    <property type="entry name" value="EF_hand_dom"/>
</dbReference>
<dbReference type="InterPro" id="IPR034325">
    <property type="entry name" value="S-100_dom"/>
</dbReference>
<dbReference type="InterPro" id="IPR013787">
    <property type="entry name" value="S100_Ca-bd_sub"/>
</dbReference>
<dbReference type="PANTHER" id="PTHR11639:SF26">
    <property type="entry name" value="CORNULIN"/>
    <property type="match status" value="1"/>
</dbReference>
<dbReference type="PANTHER" id="PTHR11639">
    <property type="entry name" value="S100 CALCIUM-BINDING PROTEIN"/>
    <property type="match status" value="1"/>
</dbReference>
<dbReference type="Pfam" id="PF01023">
    <property type="entry name" value="S_100"/>
    <property type="match status" value="1"/>
</dbReference>
<dbReference type="SMART" id="SM00054">
    <property type="entry name" value="EFh"/>
    <property type="match status" value="1"/>
</dbReference>
<dbReference type="SMART" id="SM01394">
    <property type="entry name" value="S_100"/>
    <property type="match status" value="1"/>
</dbReference>
<dbReference type="SUPFAM" id="SSF47473">
    <property type="entry name" value="EF-hand"/>
    <property type="match status" value="1"/>
</dbReference>
<dbReference type="PROSITE" id="PS00018">
    <property type="entry name" value="EF_HAND_1"/>
    <property type="match status" value="1"/>
</dbReference>
<dbReference type="PROSITE" id="PS50222">
    <property type="entry name" value="EF_HAND_2"/>
    <property type="match status" value="1"/>
</dbReference>
<evidence type="ECO:0000255" key="1">
    <source>
        <dbReference type="PROSITE-ProRule" id="PRU00448"/>
    </source>
</evidence>
<evidence type="ECO:0000256" key="2">
    <source>
        <dbReference type="SAM" id="MobiDB-lite"/>
    </source>
</evidence>
<evidence type="ECO:0000269" key="3">
    <source>
    </source>
</evidence>
<evidence type="ECO:0000269" key="4">
    <source>
    </source>
</evidence>
<evidence type="ECO:0000269" key="5">
    <source>
    </source>
</evidence>
<evidence type="ECO:0000269" key="6">
    <source>
    </source>
</evidence>
<evidence type="ECO:0000269" key="7">
    <source>
    </source>
</evidence>
<evidence type="ECO:0000269" key="8">
    <source>
    </source>
</evidence>
<evidence type="ECO:0000269" key="9">
    <source>
    </source>
</evidence>
<evidence type="ECO:0000269" key="10">
    <source>
    </source>
</evidence>
<evidence type="ECO:0000269" key="11">
    <source>
    </source>
</evidence>
<evidence type="ECO:0000303" key="12">
    <source>
    </source>
</evidence>
<evidence type="ECO:0000305" key="13"/>
<organism>
    <name type="scientific">Homo sapiens</name>
    <name type="common">Human</name>
    <dbReference type="NCBI Taxonomy" id="9606"/>
    <lineage>
        <taxon>Eukaryota</taxon>
        <taxon>Metazoa</taxon>
        <taxon>Chordata</taxon>
        <taxon>Craniata</taxon>
        <taxon>Vertebrata</taxon>
        <taxon>Euteleostomi</taxon>
        <taxon>Mammalia</taxon>
        <taxon>Eutheria</taxon>
        <taxon>Euarchontoglires</taxon>
        <taxon>Primates</taxon>
        <taxon>Haplorrhini</taxon>
        <taxon>Catarrhini</taxon>
        <taxon>Hominidae</taxon>
        <taxon>Homo</taxon>
    </lineage>
</organism>